<reference key="1">
    <citation type="journal article" date="2000" name="J. Biol. Chem.">
        <title>The Na+-driven Cl-/HCO3- exchanger. Cloning, tissue distribution, and functional characterization.</title>
        <authorList>
            <person name="Wang C.-Z."/>
            <person name="Yano H."/>
            <person name="Nagashima K."/>
            <person name="Seino S."/>
        </authorList>
    </citation>
    <scope>NUCLEOTIDE SEQUENCE [MRNA] (ISOFORM 2)</scope>
    <scope>FUNCTION (ISOFORM 2)</scope>
    <scope>CATALYTIC ACTIVITY (ISOFORM 2)</scope>
    <scope>TISSUE SPECIFICITY (ISOFORM 2)</scope>
</reference>
<reference key="2">
    <citation type="journal article" date="2011" name="Brain Res.">
        <title>Expression and distribution of NBCn2 (Slc4a10) splice variants in mouse brain: cloning of novel variant NBCn2-D.</title>
        <authorList>
            <person name="Liu Y."/>
            <person name="Xu J.Y."/>
            <person name="Wang D.K."/>
            <person name="Boron W.F."/>
            <person name="Chen L.M."/>
        </authorList>
    </citation>
    <scope>NUCLEOTIDE SEQUENCE [MRNA] (ISOFORMS 3 AND 4)</scope>
    <scope>ALTERNATIVE SPLICING</scope>
    <scope>TISSUE SPECIFICITY</scope>
    <source>
        <tissue>Brain</tissue>
    </source>
</reference>
<reference key="3">
    <citation type="journal article" date="2013" name="PLoS ONE">
        <title>Cloning and functional characterization of novel variants and tissue-specific expression of alternative amino and carboxyl termini of products of slc4a10.</title>
        <authorList>
            <person name="Liu Y."/>
            <person name="Wang D.K."/>
            <person name="Jiang D.Z."/>
            <person name="Qin X."/>
            <person name="Xie Z.D."/>
            <person name="Wang Q.K."/>
            <person name="Liu M."/>
            <person name="Chen L.M."/>
        </authorList>
    </citation>
    <scope>NUCLEOTIDE SEQUENCE [MRNA] (ISOFORMS 5; 6; 7; 8; 9 AND 10)</scope>
    <scope>ALTERNATIVE PROMOTER USAGE</scope>
    <scope>ALTERNATIVE SPLICING</scope>
</reference>
<reference key="4">
    <citation type="submission" date="2005-02" db="EMBL/GenBank/DDBJ databases">
        <title>Prediction of the coding sequences of mouse homologues of KIAA gene. The complete nucleotide sequences of mouse KIAA-homologous cDNAs identified by screening of terminal sequences of cDNA clones randomly sampled from size-fractionated libraries.</title>
        <authorList>
            <person name="Okazaki N."/>
            <person name="Kikuno R.F."/>
            <person name="Ohara R."/>
            <person name="Inamoto S."/>
            <person name="Nagase T."/>
            <person name="Ohara O."/>
            <person name="Koga H."/>
        </authorList>
    </citation>
    <scope>NUCLEOTIDE SEQUENCE [LARGE SCALE MRNA] (ISOFORM 1)</scope>
    <source>
        <tissue>Fetal brain</tissue>
    </source>
</reference>
<reference key="5">
    <citation type="journal article" date="2004" name="Genome Res.">
        <title>The status, quality, and expansion of the NIH full-length cDNA project: the Mammalian Gene Collection (MGC).</title>
        <authorList>
            <consortium name="The MGC Project Team"/>
        </authorList>
    </citation>
    <scope>NUCLEOTIDE SEQUENCE [LARGE SCALE MRNA] (ISOFORM 2)</scope>
    <source>
        <tissue>Eye</tissue>
    </source>
</reference>
<reference key="6">
    <citation type="journal article" date="2004" name="Am. J. Physiol.">
        <title>A SCL4A10 gene product maps selectively to the basolateral plasma membrane of choroid plexus epithelial cells.</title>
        <authorList>
            <person name="Praetorius J."/>
            <person name="Nejsum L.N."/>
            <person name="Nielsen S."/>
        </authorList>
    </citation>
    <scope>TISSUE SPECIFICITY</scope>
    <scope>SUBCELLULAR LOCATION</scope>
</reference>
<reference key="7">
    <citation type="journal article" date="2004" name="Gene Expr. Patterns">
        <title>Expression of the sodium-driven chloride bicarbonate exchanger NCBE during prenatal mouse development.</title>
        <authorList>
            <person name="Huebner C.A."/>
            <person name="Hentschke M."/>
            <person name="Jacobs S."/>
            <person name="Hermans-Borgmeyer I."/>
        </authorList>
    </citation>
    <scope>TISSUE SPECIFICITY</scope>
    <scope>DEVELOPMENTAL STAGE</scope>
</reference>
<reference key="8">
    <citation type="journal article" date="2006" name="Mol. Cell. Proteomics">
        <title>Comprehensive identification of phosphorylation sites in postsynaptic density preparations.</title>
        <authorList>
            <person name="Trinidad J.C."/>
            <person name="Specht C.G."/>
            <person name="Thalhammer A."/>
            <person name="Schoepfer R."/>
            <person name="Burlingame A.L."/>
        </authorList>
    </citation>
    <scope>IDENTIFICATION BY MASS SPECTROMETRY [LARGE SCALE ANALYSIS]</scope>
    <source>
        <tissue>Brain</tissue>
    </source>
</reference>
<reference key="9">
    <citation type="journal article" date="2007" name="Am. J. Physiol.">
        <title>Chronic continuous hypoxia decreases the expression of SLC4A7 (NBCn1) and SLC4A10 (NCBE) in mouse brain.</title>
        <authorList>
            <person name="Chen L.M."/>
            <person name="Choi I."/>
            <person name="Haddad G.G."/>
            <person name="Boron W.F."/>
        </authorList>
    </citation>
    <scope>REPRESSION BY HYPOXIA</scope>
</reference>
<reference key="10">
    <citation type="journal article" date="2008" name="Neuroscience">
        <title>Use of a new polyclonal antibody to study the distribution and glycosylation of the sodium-coupled bicarbonate transporter NCBE in rodent brain.</title>
        <authorList>
            <person name="Chen L.M."/>
            <person name="Kelly M.L."/>
            <person name="Rojas J.D."/>
            <person name="Parker M.D."/>
            <person name="Gill H.S."/>
            <person name="Davis B.A."/>
            <person name="Boron W.F."/>
        </authorList>
    </citation>
    <scope>SUBCELLULAR LOCATION</scope>
    <scope>TISSUE SPECIFICITY</scope>
    <scope>GLYCOSYLATION</scope>
</reference>
<reference key="11">
    <citation type="journal article" date="2008" name="Proc. Natl. Acad. Sci. U.S.A.">
        <title>Mice with targeted Slc4a10 gene disruption have small brain ventricles and show reduced neuronal excitability.</title>
        <authorList>
            <person name="Jacobs S."/>
            <person name="Ruusuvuori E."/>
            <person name="Sipilae S.T."/>
            <person name="Haapanen A."/>
            <person name="Damkier H.H."/>
            <person name="Kurth I."/>
            <person name="Hentschke M."/>
            <person name="Schweizer M."/>
            <person name="Rudhard Y."/>
            <person name="Laatikainen L.M."/>
            <person name="Tyynelae J."/>
            <person name="Praetorius J."/>
            <person name="Voipio J."/>
            <person name="Huebner C.A."/>
        </authorList>
    </citation>
    <scope>FUNCTION</scope>
    <scope>SUBCELLULAR LOCATION</scope>
    <scope>TISSUE SPECIFICITY</scope>
    <scope>DISRUPTION PHENOTYPE</scope>
</reference>
<reference key="12">
    <citation type="journal article" date="2010" name="Cell">
        <title>A tissue-specific atlas of mouse protein phosphorylation and expression.</title>
        <authorList>
            <person name="Huttlin E.L."/>
            <person name="Jedrychowski M.P."/>
            <person name="Elias J.E."/>
            <person name="Goswami T."/>
            <person name="Rad R."/>
            <person name="Beausoleil S.A."/>
            <person name="Villen J."/>
            <person name="Haas W."/>
            <person name="Sowa M.E."/>
            <person name="Gygi S.P."/>
        </authorList>
    </citation>
    <scope>PHOSPHORYLATION [LARGE SCALE ANALYSIS] AT SER-89; THR-94; SER-276; SER-1057 AND SER-1085</scope>
    <scope>IDENTIFICATION BY MASS SPECTROMETRY [LARGE SCALE ANALYSIS]</scope>
    <source>
        <tissue>Brain</tissue>
    </source>
</reference>
<reference key="13">
    <citation type="journal article" date="2010" name="J. Biol. Chem.">
        <title>Na+-dependent HCO3- import by the slc4a10 gene product involves Cl- export.</title>
        <authorList>
            <person name="Damkier H.H."/>
            <person name="Aalkjaer C."/>
            <person name="Praetorius J."/>
        </authorList>
    </citation>
    <scope>FUNCTION</scope>
    <scope>CATALYTIC ACTIVITY</scope>
    <scope>MUTAGENESIS OF GLU-585; GLU-891; GLU-893 AND HIS-977</scope>
</reference>
<reference key="14">
    <citation type="journal article" date="2010" name="Neuroscience">
        <title>Distribution of NBCn2 (SLC4A10) splice variants in mouse brain.</title>
        <authorList>
            <person name="Liu Y."/>
            <person name="Xu K."/>
            <person name="Chen L.M."/>
            <person name="Sun X."/>
            <person name="Parker M.D."/>
            <person name="Kelly M.L."/>
            <person name="LaManna J.C."/>
            <person name="Boron W.F."/>
        </authorList>
    </citation>
    <scope>SUBCELLULAR LOCATION</scope>
    <scope>ALTERNATIVE SPLICING</scope>
    <scope>TISSUE SPECIFICITY</scope>
</reference>
<reference key="15">
    <citation type="journal article" date="2012" name="PLoS ONE">
        <title>Lack of the sodium-driven chloride bicarbonate exchanger NCBE impairs visual function in the mouse retina.</title>
        <authorList>
            <person name="Hilgen G."/>
            <person name="Huebner A.K."/>
            <person name="Tanimoto N."/>
            <person name="Sothilingam V."/>
            <person name="Seide C."/>
            <person name="Garcia Garrido M."/>
            <person name="Schmidt K.F."/>
            <person name="Seeliger M.W."/>
            <person name="Loewel S."/>
            <person name="Weiler R."/>
            <person name="Huebner C.A."/>
            <person name="Dedek K."/>
        </authorList>
    </citation>
    <scope>FUNCTION</scope>
    <scope>SUBCELLULAR LOCATION</scope>
    <scope>TISSUE SPECIFICITY</scope>
    <scope>DISRUPTION PHENOTYPE</scope>
</reference>
<reference key="16">
    <citation type="journal article" date="2014" name="Eur. J. Neurosci.">
        <title>Neuron type- and input pathway-dependent expression of Slc4a10 in adult mouse brains.</title>
        <authorList>
            <person name="Song X."/>
            <person name="Yamasaki M."/>
            <person name="Miyazaki T."/>
            <person name="Konno K."/>
            <person name="Uchigashima M."/>
            <person name="Watanabe M."/>
        </authorList>
    </citation>
    <scope>SUBCELLULAR LOCATION</scope>
    <scope>TISSUE SPECIFICITY</scope>
</reference>
<reference key="17">
    <citation type="journal article" date="2015" name="Front. Cell. Neurosci.">
        <title>Disruption of Slc4a10 augments neuronal excitability and modulates synaptic short-term plasticity.</title>
        <authorList>
            <person name="Sinning A."/>
            <person name="Liebmann L."/>
            <person name="Huebner C.A."/>
        </authorList>
    </citation>
    <scope>FUNCTION</scope>
    <scope>SUBCELLULAR LOCATION</scope>
    <scope>DISRUPTION PHENOTYPE</scope>
</reference>
<reference key="18">
    <citation type="journal article" date="2017" name="Sci. Rep.">
        <title>The crystal structure of the regulatory domain of the human sodium-driven chloride/bicarbonate exchanger.</title>
        <authorList>
            <person name="Alvadia C.M."/>
            <person name="Sommer T."/>
            <person name="Bjerregaard-Andersen K."/>
            <person name="Damkier H.H."/>
            <person name="Montrasio M."/>
            <person name="Aalkjaer C."/>
            <person name="Morth J.P."/>
        </authorList>
    </citation>
    <scope>ZINC-BINDING (ISOFORM 2)</scope>
    <scope>ACTIVITY REGULATION (ISOFORM 2)</scope>
</reference>
<reference key="19">
    <citation type="journal article" date="2023" name="Brain">
        <title>SLC4A10 mutation causes a neurological disorder associated with impaired GABAergic transmission.</title>
        <authorList>
            <person name="Fasham J."/>
            <person name="Huebner A.K."/>
            <person name="Liebmann L."/>
            <person name="Khalaf-Nazzal R."/>
            <person name="Maroofian R."/>
            <person name="Kryeziu N."/>
            <person name="Wortmann S.B."/>
            <person name="Leslie J.S."/>
            <person name="Ubeyratna N."/>
            <person name="Mancini G.M.S."/>
            <person name="van Slegtenhorst M."/>
            <person name="Wilke M."/>
            <person name="Haack T.B."/>
            <person name="Shamseldin H.E."/>
            <person name="Gleeson J.G."/>
            <person name="Almuhaizea M."/>
            <person name="Dweikat I."/>
            <person name="Abu-Libdeh B."/>
            <person name="Daana M."/>
            <person name="Zaki M.S."/>
            <person name="Wakeling M.N."/>
            <person name="McGavin L."/>
            <person name="Turnpenny P.D."/>
            <person name="Alkuraya F.S."/>
            <person name="Houlden H."/>
            <person name="Schlattmann P."/>
            <person name="Kaila K."/>
            <person name="Crosby A.H."/>
            <person name="Baple E.L."/>
            <person name="Huebner C.A."/>
        </authorList>
    </citation>
    <scope>FUNCTION</scope>
    <scope>SUBCELLULAR LOCATION</scope>
</reference>
<dbReference type="EMBL" id="AB033759">
    <property type="protein sequence ID" value="BAB17922.1"/>
    <property type="molecule type" value="mRNA"/>
</dbReference>
<dbReference type="EMBL" id="HQ825316">
    <property type="protein sequence ID" value="ADX99207.1"/>
    <property type="molecule type" value="mRNA"/>
</dbReference>
<dbReference type="EMBL" id="HQ831517">
    <property type="protein sequence ID" value="ADW85802.1"/>
    <property type="molecule type" value="mRNA"/>
</dbReference>
<dbReference type="EMBL" id="JF500487">
    <property type="protein sequence ID" value="AEN71161.1"/>
    <property type="molecule type" value="mRNA"/>
</dbReference>
<dbReference type="EMBL" id="JF500488">
    <property type="protein sequence ID" value="AEN71162.1"/>
    <property type="molecule type" value="mRNA"/>
</dbReference>
<dbReference type="EMBL" id="JF500489">
    <property type="protein sequence ID" value="AEN71163.1"/>
    <property type="molecule type" value="mRNA"/>
</dbReference>
<dbReference type="EMBL" id="JF500490">
    <property type="protein sequence ID" value="AEN71164.1"/>
    <property type="molecule type" value="mRNA"/>
</dbReference>
<dbReference type="EMBL" id="JX220977">
    <property type="protein sequence ID" value="AFN27376.1"/>
    <property type="molecule type" value="mRNA"/>
</dbReference>
<dbReference type="EMBL" id="JX254917">
    <property type="protein sequence ID" value="AFQ60533.1"/>
    <property type="molecule type" value="mRNA"/>
</dbReference>
<dbReference type="EMBL" id="AK220501">
    <property type="protein sequence ID" value="BAD90511.1"/>
    <property type="status" value="ALT_INIT"/>
    <property type="molecule type" value="mRNA"/>
</dbReference>
<dbReference type="EMBL" id="BC039226">
    <property type="protein sequence ID" value="AAH39226.1"/>
    <property type="molecule type" value="mRNA"/>
</dbReference>
<dbReference type="CCDS" id="CCDS16064.1">
    <molecule id="Q5DTL9-2"/>
</dbReference>
<dbReference type="CCDS" id="CCDS57172.1">
    <molecule id="Q5DTL9-1"/>
</dbReference>
<dbReference type="CCDS" id="CCDS57173.1">
    <molecule id="Q5DTL9-3"/>
</dbReference>
<dbReference type="RefSeq" id="NP_001229307.1">
    <molecule id="Q5DTL9-4"/>
    <property type="nucleotide sequence ID" value="NM_001242378.2"/>
</dbReference>
<dbReference type="RefSeq" id="NP_001229308.1">
    <molecule id="Q5DTL9-3"/>
    <property type="nucleotide sequence ID" value="NM_001242379.2"/>
</dbReference>
<dbReference type="RefSeq" id="NP_001229309.1">
    <molecule id="Q5DTL9-1"/>
    <property type="nucleotide sequence ID" value="NM_001242380.2"/>
</dbReference>
<dbReference type="RefSeq" id="NP_001229310.1">
    <property type="nucleotide sequence ID" value="NM_001242381.1"/>
</dbReference>
<dbReference type="RefSeq" id="NP_001229312.1">
    <property type="nucleotide sequence ID" value="NM_001242383.1"/>
</dbReference>
<dbReference type="RefSeq" id="NP_001349600.1">
    <molecule id="Q5DTL9-8"/>
    <property type="nucleotide sequence ID" value="NM_001362671.2"/>
</dbReference>
<dbReference type="RefSeq" id="NP_001349602.1">
    <molecule id="Q5DTL9-9"/>
    <property type="nucleotide sequence ID" value="NM_001362673.2"/>
</dbReference>
<dbReference type="RefSeq" id="NP_001349603.1">
    <molecule id="Q5DTL9-5"/>
    <property type="nucleotide sequence ID" value="NM_001362674.2"/>
</dbReference>
<dbReference type="RefSeq" id="NP_001349604.1">
    <molecule id="Q5DTL9-6"/>
    <property type="nucleotide sequence ID" value="NM_001362675.2"/>
</dbReference>
<dbReference type="RefSeq" id="NP_001349605.1">
    <molecule id="Q5DTL9-7"/>
    <property type="nucleotide sequence ID" value="NM_001362676.2"/>
</dbReference>
<dbReference type="RefSeq" id="NP_291030.2">
    <molecule id="Q5DTL9-2"/>
    <property type="nucleotide sequence ID" value="NM_033552.4"/>
</dbReference>
<dbReference type="RefSeq" id="XP_006500511.1">
    <property type="nucleotide sequence ID" value="XM_006500448.3"/>
</dbReference>
<dbReference type="RefSeq" id="XP_006500512.1">
    <property type="nucleotide sequence ID" value="XM_006500449.3"/>
</dbReference>
<dbReference type="RefSeq" id="XP_006500513.1">
    <property type="nucleotide sequence ID" value="XM_006500450.3"/>
</dbReference>
<dbReference type="RefSeq" id="XP_006500514.1">
    <property type="nucleotide sequence ID" value="XM_006500451.3"/>
</dbReference>
<dbReference type="SMR" id="Q5DTL9"/>
<dbReference type="BioGRID" id="220486">
    <property type="interactions" value="6"/>
</dbReference>
<dbReference type="FunCoup" id="Q5DTL9">
    <property type="interactions" value="656"/>
</dbReference>
<dbReference type="STRING" id="10090.ENSMUSP00000108099"/>
<dbReference type="TCDB" id="2.A.31.2.3">
    <property type="family name" value="the anion exchanger (ae) family"/>
</dbReference>
<dbReference type="GlyCosmos" id="Q5DTL9">
    <property type="glycosylation" value="3 sites, No reported glycans"/>
</dbReference>
<dbReference type="GlyGen" id="Q5DTL9">
    <property type="glycosylation" value="4 sites, 3 N-linked glycans (3 sites)"/>
</dbReference>
<dbReference type="iPTMnet" id="Q5DTL9"/>
<dbReference type="PhosphoSitePlus" id="Q5DTL9"/>
<dbReference type="SwissPalm" id="Q5DTL9"/>
<dbReference type="jPOST" id="Q5DTL9"/>
<dbReference type="PaxDb" id="10090-ENSMUSP00000099796"/>
<dbReference type="ProteomicsDB" id="256823">
    <molecule id="Q5DTL9-1"/>
</dbReference>
<dbReference type="ProteomicsDB" id="256824">
    <molecule id="Q5DTL9-2"/>
</dbReference>
<dbReference type="Antibodypedia" id="48063">
    <property type="antibodies" value="30 antibodies from 14 providers"/>
</dbReference>
<dbReference type="DNASU" id="94229"/>
<dbReference type="Ensembl" id="ENSMUST00000054484.15">
    <molecule id="Q5DTL9-3"/>
    <property type="protein sequence ID" value="ENSMUSP00000061411.9"/>
    <property type="gene ID" value="ENSMUSG00000026904.18"/>
</dbReference>
<dbReference type="Ensembl" id="ENSMUST00000102735.10">
    <molecule id="Q5DTL9-2"/>
    <property type="protein sequence ID" value="ENSMUSP00000099796.4"/>
    <property type="gene ID" value="ENSMUSG00000026904.18"/>
</dbReference>
<dbReference type="Ensembl" id="ENSMUST00000112480.3">
    <molecule id="Q5DTL9-1"/>
    <property type="protein sequence ID" value="ENSMUSP00000108099.3"/>
    <property type="gene ID" value="ENSMUSG00000026904.18"/>
</dbReference>
<dbReference type="GeneID" id="94229"/>
<dbReference type="KEGG" id="mmu:94229"/>
<dbReference type="UCSC" id="uc008jve.3">
    <molecule id="Q5DTL9-2"/>
    <property type="organism name" value="mouse"/>
</dbReference>
<dbReference type="UCSC" id="uc008jvf.3">
    <molecule id="Q5DTL9-1"/>
    <property type="organism name" value="mouse"/>
</dbReference>
<dbReference type="AGR" id="MGI:2150150"/>
<dbReference type="CTD" id="57282"/>
<dbReference type="MGI" id="MGI:2150150">
    <property type="gene designation" value="Slc4a10"/>
</dbReference>
<dbReference type="VEuPathDB" id="HostDB:ENSMUSG00000026904"/>
<dbReference type="eggNOG" id="KOG1172">
    <property type="taxonomic scope" value="Eukaryota"/>
</dbReference>
<dbReference type="GeneTree" id="ENSGT00940000156972"/>
<dbReference type="HOGENOM" id="CLU_002289_5_2_1"/>
<dbReference type="InParanoid" id="Q5DTL9"/>
<dbReference type="OMA" id="EDAEKEX"/>
<dbReference type="OrthoDB" id="1735926at2759"/>
<dbReference type="PhylomeDB" id="Q5DTL9"/>
<dbReference type="TreeFam" id="TF313630"/>
<dbReference type="Reactome" id="R-MMU-425381">
    <property type="pathway name" value="Bicarbonate transporters"/>
</dbReference>
<dbReference type="BioGRID-ORCS" id="94229">
    <property type="hits" value="4 hits in 77 CRISPR screens"/>
</dbReference>
<dbReference type="CD-CODE" id="CE726F99">
    <property type="entry name" value="Postsynaptic density"/>
</dbReference>
<dbReference type="ChiTaRS" id="Slc4a10">
    <property type="organism name" value="mouse"/>
</dbReference>
<dbReference type="PRO" id="PR:Q5DTL9"/>
<dbReference type="Proteomes" id="UP000000589">
    <property type="component" value="Chromosome 2"/>
</dbReference>
<dbReference type="RNAct" id="Q5DTL9">
    <property type="molecule type" value="protein"/>
</dbReference>
<dbReference type="Bgee" id="ENSMUSG00000026904">
    <property type="expression patterns" value="Expressed in choroid plexus epithelium and 116 other cell types or tissues"/>
</dbReference>
<dbReference type="ExpressionAtlas" id="Q5DTL9">
    <property type="expression patterns" value="baseline and differential"/>
</dbReference>
<dbReference type="GO" id="GO:0097440">
    <property type="term" value="C:apical dendrite"/>
    <property type="evidence" value="ECO:0000314"/>
    <property type="project" value="MGI"/>
</dbReference>
<dbReference type="GO" id="GO:0016324">
    <property type="term" value="C:apical plasma membrane"/>
    <property type="evidence" value="ECO:0000250"/>
    <property type="project" value="UniProtKB"/>
</dbReference>
<dbReference type="GO" id="GO:0043679">
    <property type="term" value="C:axon terminus"/>
    <property type="evidence" value="ECO:0000314"/>
    <property type="project" value="UniProtKB"/>
</dbReference>
<dbReference type="GO" id="GO:0097441">
    <property type="term" value="C:basal dendrite"/>
    <property type="evidence" value="ECO:0000314"/>
    <property type="project" value="MGI"/>
</dbReference>
<dbReference type="GO" id="GO:0016323">
    <property type="term" value="C:basolateral plasma membrane"/>
    <property type="evidence" value="ECO:0000314"/>
    <property type="project" value="UniProtKB"/>
</dbReference>
<dbReference type="GO" id="GO:0097442">
    <property type="term" value="C:CA3 pyramidal cell dendrite"/>
    <property type="evidence" value="ECO:0000314"/>
    <property type="project" value="MGI"/>
</dbReference>
<dbReference type="GO" id="GO:0030425">
    <property type="term" value="C:dendrite"/>
    <property type="evidence" value="ECO:0000314"/>
    <property type="project" value="UniProtKB"/>
</dbReference>
<dbReference type="GO" id="GO:0098982">
    <property type="term" value="C:GABA-ergic synapse"/>
    <property type="evidence" value="ECO:0000314"/>
    <property type="project" value="UniProtKB"/>
</dbReference>
<dbReference type="GO" id="GO:0043025">
    <property type="term" value="C:neuronal cell body"/>
    <property type="evidence" value="ECO:0000314"/>
    <property type="project" value="UniProtKB"/>
</dbReference>
<dbReference type="GO" id="GO:0043204">
    <property type="term" value="C:perikaryon"/>
    <property type="evidence" value="ECO:0007669"/>
    <property type="project" value="UniProtKB-SubCell"/>
</dbReference>
<dbReference type="GO" id="GO:0005886">
    <property type="term" value="C:plasma membrane"/>
    <property type="evidence" value="ECO:0000314"/>
    <property type="project" value="MGI"/>
</dbReference>
<dbReference type="GO" id="GO:0098794">
    <property type="term" value="C:postsynapse"/>
    <property type="evidence" value="ECO:0007669"/>
    <property type="project" value="UniProtKB-SubCell"/>
</dbReference>
<dbReference type="GO" id="GO:0036477">
    <property type="term" value="C:somatodendritic compartment"/>
    <property type="evidence" value="ECO:0000314"/>
    <property type="project" value="UniProtKB"/>
</dbReference>
<dbReference type="GO" id="GO:0045202">
    <property type="term" value="C:synapse"/>
    <property type="evidence" value="ECO:0000314"/>
    <property type="project" value="UniProtKB"/>
</dbReference>
<dbReference type="GO" id="GO:0022853">
    <property type="term" value="F:active monoatomic ion transmembrane transporter activity"/>
    <property type="evidence" value="ECO:0007669"/>
    <property type="project" value="UniProtKB-ARBA"/>
</dbReference>
<dbReference type="GO" id="GO:0140892">
    <property type="term" value="F:sodium,bicarbonate:chloride antiporter activity"/>
    <property type="evidence" value="ECO:0000314"/>
    <property type="project" value="UniProtKB"/>
</dbReference>
<dbReference type="GO" id="GO:0008510">
    <property type="term" value="F:sodium:bicarbonate symporter activity"/>
    <property type="evidence" value="ECO:0000314"/>
    <property type="project" value="UniProtKB"/>
</dbReference>
<dbReference type="GO" id="GO:0048854">
    <property type="term" value="P:brain morphogenesis"/>
    <property type="evidence" value="ECO:0000315"/>
    <property type="project" value="MGI"/>
</dbReference>
<dbReference type="GO" id="GO:0035641">
    <property type="term" value="P:locomotory exploration behavior"/>
    <property type="evidence" value="ECO:0000315"/>
    <property type="project" value="MGI"/>
</dbReference>
<dbReference type="GO" id="GO:0035264">
    <property type="term" value="P:multicellular organism growth"/>
    <property type="evidence" value="ECO:0000315"/>
    <property type="project" value="MGI"/>
</dbReference>
<dbReference type="GO" id="GO:0009791">
    <property type="term" value="P:post-embryonic development"/>
    <property type="evidence" value="ECO:0000315"/>
    <property type="project" value="MGI"/>
</dbReference>
<dbReference type="GO" id="GO:0006486">
    <property type="term" value="P:protein glycosylation"/>
    <property type="evidence" value="ECO:0000266"/>
    <property type="project" value="MGI"/>
</dbReference>
<dbReference type="GO" id="GO:1902600">
    <property type="term" value="P:proton transmembrane transport"/>
    <property type="evidence" value="ECO:0000315"/>
    <property type="project" value="MGI"/>
</dbReference>
<dbReference type="GO" id="GO:0021860">
    <property type="term" value="P:pyramidal neuron development"/>
    <property type="evidence" value="ECO:0000315"/>
    <property type="project" value="MGI"/>
</dbReference>
<dbReference type="GO" id="GO:0030641">
    <property type="term" value="P:regulation of cellular pH"/>
    <property type="evidence" value="ECO:0000315"/>
    <property type="project" value="MGI"/>
</dbReference>
<dbReference type="GO" id="GO:0006885">
    <property type="term" value="P:regulation of pH"/>
    <property type="evidence" value="ECO:0000314"/>
    <property type="project" value="MGI"/>
</dbReference>
<dbReference type="GO" id="GO:0048172">
    <property type="term" value="P:regulation of short-term neuronal synaptic plasticity"/>
    <property type="evidence" value="ECO:0000315"/>
    <property type="project" value="UniProtKB"/>
</dbReference>
<dbReference type="GO" id="GO:0009416">
    <property type="term" value="P:response to light stimulus"/>
    <property type="evidence" value="ECO:0000315"/>
    <property type="project" value="MGI"/>
</dbReference>
<dbReference type="GO" id="GO:0007601">
    <property type="term" value="P:visual perception"/>
    <property type="evidence" value="ECO:0000315"/>
    <property type="project" value="UniProtKB"/>
</dbReference>
<dbReference type="FunFam" id="1.10.287.570:FF:000001">
    <property type="entry name" value="Anion exchange protein"/>
    <property type="match status" value="1"/>
</dbReference>
<dbReference type="Gene3D" id="1.10.287.570">
    <property type="entry name" value="Helical hairpin bin"/>
    <property type="match status" value="1"/>
</dbReference>
<dbReference type="Gene3D" id="3.40.930.10">
    <property type="entry name" value="Mannitol-specific EII, Chain A"/>
    <property type="match status" value="1"/>
</dbReference>
<dbReference type="InterPro" id="IPR013769">
    <property type="entry name" value="Band3_cytoplasmic_dom"/>
</dbReference>
<dbReference type="InterPro" id="IPR011531">
    <property type="entry name" value="HCO3_transpt-like_TM_dom"/>
</dbReference>
<dbReference type="InterPro" id="IPR003020">
    <property type="entry name" value="HCO3_transpt_euk"/>
</dbReference>
<dbReference type="InterPro" id="IPR003024">
    <property type="entry name" value="Na/HCO3_transpt"/>
</dbReference>
<dbReference type="InterPro" id="IPR016152">
    <property type="entry name" value="PTrfase/Anion_transptr"/>
</dbReference>
<dbReference type="NCBIfam" id="TIGR00834">
    <property type="entry name" value="ae"/>
    <property type="match status" value="1"/>
</dbReference>
<dbReference type="PANTHER" id="PTHR11453">
    <property type="entry name" value="ANION EXCHANGE PROTEIN"/>
    <property type="match status" value="1"/>
</dbReference>
<dbReference type="PANTHER" id="PTHR11453:SF32">
    <property type="entry name" value="SODIUM-DRIVEN CHLORIDE BICARBONATE EXCHANGER"/>
    <property type="match status" value="1"/>
</dbReference>
<dbReference type="Pfam" id="PF07565">
    <property type="entry name" value="Band_3_cyto"/>
    <property type="match status" value="1"/>
</dbReference>
<dbReference type="Pfam" id="PF00955">
    <property type="entry name" value="HCO3_cotransp"/>
    <property type="match status" value="1"/>
</dbReference>
<dbReference type="PRINTS" id="PR01231">
    <property type="entry name" value="HCO3TRNSPORT"/>
</dbReference>
<dbReference type="PRINTS" id="PR01232">
    <property type="entry name" value="NAHCO3TRSPRT"/>
</dbReference>
<dbReference type="SUPFAM" id="SSF55804">
    <property type="entry name" value="Phoshotransferase/anion transport protein"/>
    <property type="match status" value="1"/>
</dbReference>
<sequence length="1118" mass="125817">MEIKDQGAQMEPLLPTRNDEEAVVDRGGTRSILKTHFEKEDLEGHRTLFIGVHVPLGGRKSHRRHRHRGHKHRKRDRERDSGLEDGRESPSFDTPSQRVQFILGTEDDDEEHLPHDLFTELDEICWREGEDAEWRETARWLKFEEDVEDGGERWSKPYVATLSLHSLFELRSCILNGTVLLDMHANTIEEIADMVLDQQVSSGQLNEDVRHRVHEALMKQHHHQNQKKLANRIPIVRSFADIGKKQSEPNSMDKNAGQVVSPQSAPACAENKNDVSRENSTVDFSKGLGGQQKGHTSPCGMKQRLDKGPPHQQEREVDLHFMKKIPPGAEASNILVGELEFLDRTVVAFVRLSPAVLLQGLAEVPIPSRFLFILLGPLGKGQQYHEIGRSIATLMTDEVFHDVAYKAKDRNDLVSGIDEFLDQVTVLPPGEWDPSIRIEPPKNVPSQEKRKIPAVPNGTAAHGEAEPHGGHSGPELQRTGRIFGGLILDIKRKAPFFWSDFRDAFSLQCLASFLFLYCACMSPVITFGGLLGEATEGRISAIESLFGASMTGIAYSLFGGQPLTILGSTGPVLVFEKILFKFCKEYGLSYLSLRASIGLWTATLCIILVATDASSLVCYITRFTEEAFASLICIIFIYEALEKLFELSETYPINMHNDLELLTQYSCNCMEPHSPSNDTLKEWRESNLSASDIIWGNLTVSECRSLHGEYVGRACGHGHPYVPDVLFWSVILFFSTVTMSATLKQFKTSRYFPTKVRSIVSDFAVFLTILCMVLIDYAIGIPSPKLQVPSVFKPTRDDRGWFVTPLGPNPWWTIIAAIIPALLCTILIFMDQQITAVIINRKEHKLKKGCGYHLDLLMVAVMLGVCSIMGLPWFVAATVLSITHVNSLKLESECSAPGEQPKFLGIREQRVTGLMIFILMGSSVFMTSILKFIPMPVLYGVFLYMGASSLKGIQLFDRIKLFWMPAKHQPDFIYLRHVPLRKVHLFTVIQMSCLGLLWIIKVSRAAIVFPMMVLALVFVRKLMDFLFTKRELSWLDDLMPESKKKKLEDAEKEEEQSMLAMEDEGTVQLPLEGHYRDDPSVINISDEMSKTAMWGNLLVTADNSKEKESRFPSKSSPS</sequence>
<proteinExistence type="evidence at protein level"/>
<keyword id="KW-0877">Alternative promoter usage</keyword>
<keyword id="KW-0025">Alternative splicing</keyword>
<keyword id="KW-0050">Antiport</keyword>
<keyword id="KW-1003">Cell membrane</keyword>
<keyword id="KW-0966">Cell projection</keyword>
<keyword id="KW-0325">Glycoprotein</keyword>
<keyword id="KW-0406">Ion transport</keyword>
<keyword id="KW-0472">Membrane</keyword>
<keyword id="KW-0597">Phosphoprotein</keyword>
<keyword id="KW-1185">Reference proteome</keyword>
<keyword id="KW-0915">Sodium</keyword>
<keyword id="KW-0739">Sodium transport</keyword>
<keyword id="KW-0769">Symport</keyword>
<keyword id="KW-0770">Synapse</keyword>
<keyword id="KW-0812">Transmembrane</keyword>
<keyword id="KW-1133">Transmembrane helix</keyword>
<keyword id="KW-0813">Transport</keyword>
<keyword id="KW-0862">Zinc</keyword>
<evidence type="ECO:0000250" key="1">
    <source>
        <dbReference type="UniProtKB" id="Q6U841"/>
    </source>
</evidence>
<evidence type="ECO:0000250" key="2">
    <source>
        <dbReference type="UniProtKB" id="Q80ZA5"/>
    </source>
</evidence>
<evidence type="ECO:0000255" key="3"/>
<evidence type="ECO:0000256" key="4">
    <source>
        <dbReference type="SAM" id="MobiDB-lite"/>
    </source>
</evidence>
<evidence type="ECO:0000269" key="5">
    <source>
    </source>
</evidence>
<evidence type="ECO:0000269" key="6">
    <source>
    </source>
</evidence>
<evidence type="ECO:0000269" key="7">
    <source>
    </source>
</evidence>
<evidence type="ECO:0000269" key="8">
    <source>
    </source>
</evidence>
<evidence type="ECO:0000269" key="9">
    <source>
    </source>
</evidence>
<evidence type="ECO:0000269" key="10">
    <source>
    </source>
</evidence>
<evidence type="ECO:0000269" key="11">
    <source>
    </source>
</evidence>
<evidence type="ECO:0000269" key="12">
    <source>
    </source>
</evidence>
<evidence type="ECO:0000269" key="13">
    <source>
    </source>
</evidence>
<evidence type="ECO:0000269" key="14">
    <source>
    </source>
</evidence>
<evidence type="ECO:0000269" key="15">
    <source>
    </source>
</evidence>
<evidence type="ECO:0000269" key="16">
    <source>
    </source>
</evidence>
<evidence type="ECO:0000269" key="17">
    <source>
    </source>
</evidence>
<evidence type="ECO:0000269" key="18">
    <source>
    </source>
</evidence>
<evidence type="ECO:0000269" key="19">
    <source>
    </source>
</evidence>
<evidence type="ECO:0000303" key="20">
    <source>
    </source>
</evidence>
<evidence type="ECO:0000303" key="21">
    <source>
    </source>
</evidence>
<evidence type="ECO:0000303" key="22">
    <source>
    </source>
</evidence>
<evidence type="ECO:0000303" key="23">
    <source>
    </source>
</evidence>
<evidence type="ECO:0000303" key="24">
    <source>
    </source>
</evidence>
<evidence type="ECO:0000303" key="25">
    <source>
    </source>
</evidence>
<evidence type="ECO:0000305" key="26"/>
<evidence type="ECO:0000305" key="27">
    <source>
    </source>
</evidence>
<evidence type="ECO:0000312" key="28">
    <source>
        <dbReference type="MGI" id="MGI:2150150"/>
    </source>
</evidence>
<evidence type="ECO:0007744" key="29">
    <source>
    </source>
</evidence>
<comment type="function">
    <text evidence="1 2 10 12 14 17 19">Sodium/bicarbonate cotransporter which plays an important role in regulating intracellular pH (PubMed:20566632). Has been shown to act as a sodium/bicarbonate cotransporter in exchange for intracellular chloride (PubMed:20566632). Has also been shown to act as a sodium/biocarbonate cotransporter which is not responsible for net efflux of chloride, with the observed chloride efflux being due to chloride self-exchange (By similarity). Controls neuronal pH and may contribute to the secretion of cerebrospinal fluid (PubMed:18165320). Acting on presynaptic intracellular pH, it promotes GABA release, reduces the excitability of CA1 pyramidal neurons, and modulates short-term synaptic plasticity (PubMed:26136660, PubMed:37459438). Required in retinal cells to maintain normal pH which is necessary for normal vision (PubMed:23056253). In the kidney, likely to mediate bicarbonate reclamation in the apical membrane of the proximal tubules (By similarity).</text>
</comment>
<comment type="function">
    <molecule>Isoform 2</molecule>
    <text evidence="5">Sodium/bicarbonate cotransporter which mediates cotransport of sodium and bicarbonate in association with an efflux of intracellular chloride.</text>
</comment>
<comment type="catalytic activity">
    <reaction evidence="12">
        <text>2 hydrogencarbonate(out) + chloride(in) + Na(+)(out) = 2 hydrogencarbonate(in) + chloride(out) + Na(+)(in)</text>
        <dbReference type="Rhea" id="RHEA:72739"/>
        <dbReference type="ChEBI" id="CHEBI:17544"/>
        <dbReference type="ChEBI" id="CHEBI:17996"/>
        <dbReference type="ChEBI" id="CHEBI:29101"/>
    </reaction>
</comment>
<comment type="catalytic activity">
    <molecule>Isoform 2</molecule>
    <reaction evidence="5">
        <text>2 hydrogencarbonate(out) + chloride(in) + Na(+)(out) = 2 hydrogencarbonate(in) + chloride(out) + Na(+)(in)</text>
        <dbReference type="Rhea" id="RHEA:72739"/>
        <dbReference type="ChEBI" id="CHEBI:17544"/>
        <dbReference type="ChEBI" id="CHEBI:17996"/>
        <dbReference type="ChEBI" id="CHEBI:29101"/>
    </reaction>
</comment>
<comment type="activity regulation">
    <molecule>Isoform 2</molecule>
    <text evidence="18">Zinc-binding negatively regulates its activity.</text>
</comment>
<comment type="subcellular location">
    <subcellularLocation>
        <location evidence="6 9 10 11">Basolateral cell membrane</location>
        <topology evidence="3">Multi-pass membrane protein</topology>
    </subcellularLocation>
    <subcellularLocation>
        <location evidence="2">Apical cell membrane</location>
        <topology evidence="3">Multi-pass membrane protein</topology>
    </subcellularLocation>
    <subcellularLocation>
        <location evidence="10 14 16">Cell projection</location>
        <location evidence="10 14 16">Dendrite</location>
    </subcellularLocation>
    <subcellularLocation>
        <location evidence="14">Cell projection</location>
        <location evidence="14">Axon</location>
    </subcellularLocation>
    <subcellularLocation>
        <location evidence="14">Perikaryon</location>
    </subcellularLocation>
    <subcellularLocation>
        <location evidence="14 17 19">Presynapse</location>
    </subcellularLocation>
    <subcellularLocation>
        <location evidence="14 17">Postsynapse</location>
    </subcellularLocation>
    <text evidence="10 14 19">Detected in dendrites and axon terminals of retinal OFF bipolar cells and in axon terminals of ON bipolar cells (PubMed:23056253). In amacrine cells, located in the perikaryon (PubMed:23056253). Also detected in basal and apical dendrites of hippocampal pyramidal cells (PubMed:18165320). Localized to GABAergic inhibitory presynapses (PubMed:37459438).</text>
</comment>
<comment type="alternative products">
    <event type="alternative promoter"/>
    <event type="alternative splicing"/>
    <isoform>
        <id>Q5DTL9-1</id>
        <name>1</name>
        <name evidence="23">NBCn2-B</name>
        <sequence type="displayed"/>
    </isoform>
    <isoform>
        <id>Q5DTL9-2</id>
        <name>2</name>
        <name evidence="23">NBCn2-A</name>
        <sequence type="described" ref="VSP_019654"/>
    </isoform>
    <isoform>
        <id>Q5DTL9-3</id>
        <name>3</name>
        <name evidence="23">NBCn2-C</name>
        <sequence type="described" ref="VSP_019654 VSP_060134"/>
    </isoform>
    <isoform>
        <id>Q5DTL9-4</id>
        <name>4</name>
        <name evidence="24">NBCn2-D</name>
        <sequence type="described" ref="VSP_060134"/>
    </isoform>
    <isoform>
        <id>Q5DTL9-5</id>
        <name>5</name>
        <name evidence="25">NBCn2-E</name>
        <sequence type="described" ref="VSP_060132 VSP_019654"/>
    </isoform>
    <isoform>
        <id>Q5DTL9-6</id>
        <name>6</name>
        <name evidence="25">NBCn2-F</name>
        <sequence type="described" ref="VSP_060132"/>
    </isoform>
    <isoform>
        <id>Q5DTL9-7</id>
        <name>7</name>
        <name evidence="25">NBCn2-G</name>
        <sequence type="described" ref="VSP_060132 VSP_019654 VSP_060134"/>
    </isoform>
    <isoform>
        <id>Q5DTL9-8</id>
        <name>8</name>
        <name evidence="25">NBCn2-H</name>
        <sequence type="described" ref="VSP_060132 VSP_060134"/>
    </isoform>
    <isoform>
        <id>Q5DTL9-9</id>
        <name>9</name>
        <name evidence="25">NBCn2-I</name>
        <sequence type="described" ref="VSP_060132 VSP_019654 VSP_060133"/>
    </isoform>
    <isoform>
        <id>Q5DTL9-10</id>
        <name>10</name>
        <name evidence="25">NBCn2-J</name>
        <sequence type="described" ref="VSP_060132 VSP_060133"/>
    </isoform>
    <text evidence="15">The use of 2 alternative promoters gives rise to isoforms which differ at the N-terminus. In addition, alternative splicing gives rise to further isoform diversity.</text>
</comment>
<comment type="tissue specificity">
    <text evidence="6 7 9 10 11 13 14 16">In the brain, detected in cerebral cortex, subcortex, cerebellum, hippocampus and medulla (at protein level) (PubMed:18061361, PubMed:20541593, PubMed:21439947, PubMed:24905082). In the cerebrum, expressed at high levels throughout the cortex, at lower levels in striatum and not detectable in the corpus callosum (at protein level) (PubMed:20541593). In the cerebellum, detected at high levels in the molecular layer but at very low levels in the granular layer (at protein level) (PubMed:20541593). In the central nervous system, detected in neurons in the olfactory bulb, cortex and cerebellum (at protein level) (PubMed:18165320). Within the hippocampus, abundantly expressed in CA3 pyramidal cells (at protein level) (PubMed:18165320). Strongly expressed in the retina with high levels in bipolar and amacrine cells (at protein level) (PubMed:23056253). Expressed in the epithelial cells of the choroid plexus (PubMed:14592810, PubMed:15567717). During embryonic development, expressed in neurons of the central nervous system (PubMed:15567717). Also expressed in the peripheral nervous system and in non-neuronal tissues such as the dura and some epithelia including the acid-secreting epithelium of the stomach and the duodenal epithelium (PubMed:15567717). In the embryonic retina, expression is restricted to the neuronal cell layer and the retinal pigment epithelium (PubMed:15567717).</text>
</comment>
<comment type="tissue specificity">
    <molecule>Isoform 2</molecule>
    <text evidence="5">Expressed at high levels in brain and at low levels in the pituitary, testis, kidney and ileum. Also expressed in pancreatic islets.</text>
</comment>
<comment type="developmental stage">
    <text evidence="7">In the embryonic central nervous system, detected at 12.5 dpc when expression is observed in all areas of the brain including the cerebellum (PubMed:15567717). In the embryonic cerebral cortex, detected at 14.5 dpc with levels increasing at 18.5 dpc (PubMed:15567717).</text>
</comment>
<comment type="induction">
    <text evidence="8">Repressed in the brain by chronic continuous hypoxia (at protein level).</text>
</comment>
<comment type="domain">
    <text evidence="2">The N-terminal cytoplasmic domain is likely to have a high level of intrinsic disorder.</text>
</comment>
<comment type="PTM">
    <text evidence="9">N-glycosylated.</text>
</comment>
<comment type="disruption phenotype">
    <text evidence="10 14 17">Homozygotes are born at the expected Mendelian ratio but most pups die around weaning (PubMed:18165320). When fed soft food from the second week of life onward, most pups catch up with the weight of their wild-type littermates and survive (PubMed:18165320). Adults display normal weight and lifespan, are fertile and do not display major behavioral abnormalities (PubMed:18165320). However, brain ventricle size is drastically reduced and mutants show diminished Na(+)-dependent recovery of pH following acid loading of choroid plexus epithelial cells (PubMed:18165320). Mutants also show reduced excitability of CA3 pyramidal neurons and have increased seizure threshold (PubMed:18165320). Increased excitability of CA1 pyramidal neurons and diminished paired pulse facilitation in the hippocampus (PubMed:26136660). No obvious morphological changes in the retina but mutants display decreased visual acuity and contrast sensitivity in behavioral experiments, smaller scotopic and photopic b-wave amplitudes and longer latencies in electroretinograms, and altered temporal response properties of ganglion cells (PubMed:23056253).</text>
</comment>
<comment type="similarity">
    <text evidence="26">Belongs to the anion exchanger (TC 2.A.31) family.</text>
</comment>
<comment type="caution">
    <text evidence="1 5 12">Has been shown to act as a sodium/bicarbonate cotransporter in exchange for intracellular chloride (PubMed:10993873, PubMed:20566632). Has also been shown to act as a sodium/biocarbonate cotransporter which is not responsible for net efflux of chloride, with the observed chloride efflux being due to chloride self-exchange (By similarity).</text>
</comment>
<comment type="sequence caution" evidence="26">
    <conflict type="erroneous initiation">
        <sequence resource="EMBL-CDS" id="BAD90511"/>
    </conflict>
    <text>Extended N-terminus.</text>
</comment>
<feature type="chain" id="PRO_0000245241" description="Sodium-driven chloride bicarbonate exchanger">
    <location>
        <begin position="1"/>
        <end position="1118"/>
    </location>
</feature>
<feature type="topological domain" description="Cytoplasmic" evidence="3">
    <location>
        <begin position="1"/>
        <end position="509"/>
    </location>
</feature>
<feature type="transmembrane region" description="Helical" evidence="3">
    <location>
        <begin position="510"/>
        <end position="530"/>
    </location>
</feature>
<feature type="topological domain" description="Extracellular" evidence="3">
    <location>
        <begin position="531"/>
        <end position="538"/>
    </location>
</feature>
<feature type="transmembrane region" description="Helical" evidence="3">
    <location>
        <begin position="539"/>
        <end position="559"/>
    </location>
</feature>
<feature type="topological domain" description="Cytoplasmic" evidence="3">
    <location>
        <begin position="560"/>
        <end position="562"/>
    </location>
</feature>
<feature type="transmembrane region" description="Helical" evidence="3">
    <location>
        <begin position="563"/>
        <end position="583"/>
    </location>
</feature>
<feature type="topological domain" description="Extracellular" evidence="3">
    <location>
        <begin position="584"/>
        <end position="596"/>
    </location>
</feature>
<feature type="transmembrane region" description="Helical" evidence="3">
    <location>
        <begin position="597"/>
        <end position="617"/>
    </location>
</feature>
<feature type="topological domain" description="Cytoplasmic" evidence="3">
    <location>
        <begin position="618"/>
        <end position="626"/>
    </location>
</feature>
<feature type="transmembrane region" description="Helical" evidence="3">
    <location>
        <begin position="627"/>
        <end position="647"/>
    </location>
</feature>
<feature type="topological domain" description="Extracellular" evidence="3">
    <location>
        <begin position="648"/>
        <end position="720"/>
    </location>
</feature>
<feature type="transmembrane region" description="Helical" evidence="3">
    <location>
        <begin position="721"/>
        <end position="741"/>
    </location>
</feature>
<feature type="topological domain" description="Cytoplasmic" evidence="3">
    <location>
        <begin position="742"/>
        <end position="762"/>
    </location>
</feature>
<feature type="transmembrane region" description="Helical" evidence="3">
    <location>
        <begin position="763"/>
        <end position="783"/>
    </location>
</feature>
<feature type="topological domain" description="Extracellular" evidence="3">
    <location>
        <begin position="784"/>
        <end position="809"/>
    </location>
</feature>
<feature type="transmembrane region" description="Helical" evidence="3">
    <location>
        <begin position="810"/>
        <end position="830"/>
    </location>
</feature>
<feature type="topological domain" description="Cytoplasmic" evidence="3">
    <location>
        <begin position="831"/>
        <end position="855"/>
    </location>
</feature>
<feature type="transmembrane region" description="Helical" evidence="3">
    <location>
        <begin position="856"/>
        <end position="876"/>
    </location>
</feature>
<feature type="topological domain" description="Extracellular" evidence="3">
    <location>
        <begin position="877"/>
        <end position="912"/>
    </location>
</feature>
<feature type="transmembrane region" description="Helical" evidence="3">
    <location>
        <begin position="913"/>
        <end position="933"/>
    </location>
</feature>
<feature type="topological domain" description="Cytoplasmic" evidence="3">
    <location>
        <begin position="934"/>
        <end position="935"/>
    </location>
</feature>
<feature type="transmembrane region" description="Helical" evidence="3">
    <location>
        <begin position="936"/>
        <end position="956"/>
    </location>
</feature>
<feature type="topological domain" description="Extracellular" evidence="3">
    <location>
        <begin position="957"/>
        <end position="998"/>
    </location>
</feature>
<feature type="transmembrane region" description="Helical" evidence="3">
    <location>
        <begin position="999"/>
        <end position="1019"/>
    </location>
</feature>
<feature type="topological domain" description="Cytoplasmic" evidence="3">
    <location>
        <begin position="1020"/>
        <end position="1118"/>
    </location>
</feature>
<feature type="region of interest" description="Disordered" evidence="4">
    <location>
        <begin position="1"/>
        <end position="23"/>
    </location>
</feature>
<feature type="region of interest" description="Disordered" evidence="4">
    <location>
        <begin position="58"/>
        <end position="97"/>
    </location>
</feature>
<feature type="region of interest" description="Disordered" evidence="4">
    <location>
        <begin position="269"/>
        <end position="310"/>
    </location>
</feature>
<feature type="region of interest" description="Disordered" evidence="4">
    <location>
        <begin position="457"/>
        <end position="476"/>
    </location>
</feature>
<feature type="compositionally biased region" description="Basic residues" evidence="4">
    <location>
        <begin position="59"/>
        <end position="76"/>
    </location>
</feature>
<feature type="compositionally biased region" description="Basic and acidic residues" evidence="4">
    <location>
        <begin position="77"/>
        <end position="90"/>
    </location>
</feature>
<feature type="modified residue" description="Phosphoserine" evidence="29">
    <location>
        <position position="89"/>
    </location>
</feature>
<feature type="modified residue" description="Phosphothreonine" evidence="29">
    <location>
        <position position="94"/>
    </location>
</feature>
<feature type="modified residue" description="Phosphoserine" evidence="29">
    <location>
        <position position="276"/>
    </location>
</feature>
<feature type="modified residue" description="Phosphoserine" evidence="29">
    <location>
        <position position="1057"/>
    </location>
</feature>
<feature type="modified residue" description="Phosphoserine" evidence="29">
    <location>
        <position position="1085"/>
    </location>
</feature>
<feature type="glycosylation site" description="N-linked (GlcNAc...) asparagine" evidence="3">
    <location>
        <position position="677"/>
    </location>
</feature>
<feature type="glycosylation site" description="N-linked (GlcNAc...) asparagine" evidence="3">
    <location>
        <position position="687"/>
    </location>
</feature>
<feature type="glycosylation site" description="N-linked (GlcNAc...) asparagine" evidence="3">
    <location>
        <position position="697"/>
    </location>
</feature>
<feature type="splice variant" id="VSP_060132" description="In isoform 5, isoform 6, isoform 7, isoform 8, isoform 9 and isoform 10." evidence="25">
    <original>MEIKDQGAQMEPLLPT</original>
    <variation>MQPGSCEHFQSLSQE</variation>
    <location>
        <begin position="1"/>
        <end position="16"/>
    </location>
</feature>
<feature type="splice variant" id="VSP_019654" description="In isoform 2, isoform 3, isoform 5, isoform 7 and isoform 9." evidence="20 21 23 24 25">
    <location>
        <begin position="287"/>
        <end position="316"/>
    </location>
</feature>
<feature type="splice variant" id="VSP_060133" description="In isoform 9 and isoform 10." evidence="25">
    <original>SSPS</original>
    <variation>RS</variation>
    <location>
        <begin position="1115"/>
        <end position="1118"/>
    </location>
</feature>
<feature type="splice variant" id="VSP_060134" description="In isoform 3, isoform 4, isoform 7 and isoform 8." evidence="24 25">
    <original>SPS</original>
    <variation>NESRKEKKADSGKGVDRETCL</variation>
    <location>
        <begin position="1116"/>
        <end position="1118"/>
    </location>
</feature>
<feature type="mutagenesis site" description="Reduced recovery of intracellular sodium-dependent pH." evidence="12">
    <original>E</original>
    <variation>A</variation>
    <location>
        <position position="585"/>
    </location>
</feature>
<feature type="mutagenesis site" description="Reduced recovery of intracellular sodium-dependent pH." evidence="12">
    <original>E</original>
    <variation>A</variation>
    <location>
        <position position="891"/>
    </location>
</feature>
<feature type="mutagenesis site" description="Reduced recovery of intracellular sodium-dependent pH." evidence="12">
    <original>E</original>
    <variation>A</variation>
    <location>
        <position position="893"/>
    </location>
</feature>
<feature type="mutagenesis site" description="Reduced recovery of intracellular sodium-dependent pH." evidence="12">
    <original>H</original>
    <variation>L</variation>
    <location>
        <position position="977"/>
    </location>
</feature>
<feature type="sequence conflict" description="In Ref. 1; BAB17922." evidence="26" ref="1">
    <original>F</original>
    <variation>L</variation>
    <location>
        <position position="239"/>
    </location>
</feature>
<feature type="sequence conflict" description="In Ref. 2; ADW85802, 3; AFN27376 and 5; AAH39226." evidence="26" ref="2 3 5">
    <location>
        <position position="256"/>
    </location>
</feature>
<feature type="sequence conflict" description="In Ref. 1; BAB17922." evidence="26" ref="1">
    <original>T</original>
    <variation>A</variation>
    <location>
        <position position="345"/>
    </location>
</feature>
<feature type="sequence conflict" description="In Ref. 1; BAB17922." evidence="26" ref="1">
    <original>I</original>
    <variation>M</variation>
    <location>
        <position position="487"/>
    </location>
</feature>
<feature type="sequence conflict" description="In Ref. 1; BAB17922." evidence="26" ref="1">
    <original>RD</original>
    <variation>IY</variation>
    <location>
        <begin position="796"/>
        <end position="797"/>
    </location>
</feature>
<feature type="binding site" evidence="27">
    <location sequence="Q5DTL9-2">
        <position position="221"/>
    </location>
    <ligand>
        <name>Zn(2+)</name>
        <dbReference type="ChEBI" id="CHEBI:29105"/>
    </ligand>
</feature>
<feature type="binding site" evidence="27">
    <location sequence="Q5DTL9-2">
        <position position="223"/>
    </location>
    <ligand>
        <name>Zn(2+)</name>
        <dbReference type="ChEBI" id="CHEBI:29105"/>
    </ligand>
</feature>
<accession>Q5DTL9</accession>
<accession>E9NX85</accession>
<accession>F1DFN1</accession>
<accession>G3F8Y7</accession>
<accession>G3F8Y8</accession>
<accession>G3F8Y9</accession>
<accession>G3F8Z0</accession>
<accession>I6VS12</accession>
<accession>J7K287</accession>
<accession>Q8CFS3</accession>
<accession>Q9EST0</accession>
<protein>
    <recommendedName>
        <fullName evidence="20">Sodium-driven chloride bicarbonate exchanger</fullName>
    </recommendedName>
    <alternativeName>
        <fullName evidence="28">Solute carrier family 4 member 10</fullName>
    </alternativeName>
</protein>
<name>S4A10_MOUSE</name>
<gene>
    <name evidence="28" type="primary">Slc4a10</name>
    <name evidence="28" type="synonym">Kiaa4136</name>
    <name evidence="22" type="synonym">Ncbe</name>
</gene>
<organism>
    <name type="scientific">Mus musculus</name>
    <name type="common">Mouse</name>
    <dbReference type="NCBI Taxonomy" id="10090"/>
    <lineage>
        <taxon>Eukaryota</taxon>
        <taxon>Metazoa</taxon>
        <taxon>Chordata</taxon>
        <taxon>Craniata</taxon>
        <taxon>Vertebrata</taxon>
        <taxon>Euteleostomi</taxon>
        <taxon>Mammalia</taxon>
        <taxon>Eutheria</taxon>
        <taxon>Euarchontoglires</taxon>
        <taxon>Glires</taxon>
        <taxon>Rodentia</taxon>
        <taxon>Myomorpha</taxon>
        <taxon>Muroidea</taxon>
        <taxon>Muridae</taxon>
        <taxon>Murinae</taxon>
        <taxon>Mus</taxon>
        <taxon>Mus</taxon>
    </lineage>
</organism>